<feature type="chain" id="PRO_0000315810" description="Long-chain-fatty-acid--CoA ligase ACSBG1">
    <location>
        <begin position="1"/>
        <end position="721"/>
    </location>
</feature>
<feature type="region of interest" description="Disordered" evidence="4">
    <location>
        <begin position="1"/>
        <end position="64"/>
    </location>
</feature>
<feature type="compositionally biased region" description="Polar residues" evidence="4">
    <location>
        <begin position="26"/>
        <end position="52"/>
    </location>
</feature>
<feature type="binding site" evidence="1">
    <location>
        <begin position="279"/>
        <end position="287"/>
    </location>
    <ligand>
        <name>ATP</name>
        <dbReference type="ChEBI" id="CHEBI:30616"/>
    </ligand>
</feature>
<feature type="binding site" evidence="1">
    <location>
        <begin position="469"/>
        <end position="474"/>
    </location>
    <ligand>
        <name>ATP</name>
        <dbReference type="ChEBI" id="CHEBI:30616"/>
    </ligand>
</feature>
<feature type="binding site" evidence="1">
    <location>
        <position position="547"/>
    </location>
    <ligand>
        <name>ATP</name>
        <dbReference type="ChEBI" id="CHEBI:30616"/>
    </ligand>
</feature>
<feature type="binding site" evidence="1">
    <location>
        <position position="562"/>
    </location>
    <ligand>
        <name>ATP</name>
        <dbReference type="ChEBI" id="CHEBI:30616"/>
    </ligand>
</feature>
<feature type="binding site" evidence="1">
    <location>
        <position position="698"/>
    </location>
    <ligand>
        <name>ATP</name>
        <dbReference type="ChEBI" id="CHEBI:30616"/>
    </ligand>
</feature>
<feature type="modified residue" description="Phosphoserine" evidence="2">
    <location>
        <position position="34"/>
    </location>
</feature>
<feature type="modified residue" description="Phosphoserine" evidence="2">
    <location>
        <position position="50"/>
    </location>
</feature>
<feature type="modified residue" description="Phosphoserine" evidence="12">
    <location>
        <position position="53"/>
    </location>
</feature>
<feature type="modified residue" description="Phosphoserine" evidence="12">
    <location>
        <position position="70"/>
    </location>
</feature>
<feature type="modified residue" description="Phosphotyrosine" evidence="11">
    <location>
        <position position="655"/>
    </location>
</feature>
<feature type="mutagenesis site" description="Abolishes enzyme activity; when associated with M-287." evidence="5">
    <original>G</original>
    <variation>A</variation>
    <location>
        <position position="281"/>
    </location>
</feature>
<feature type="mutagenesis site" description="Abolishes enzyme activity; when associated with A-281." evidence="5">
    <original>K</original>
    <variation>M</variation>
    <location>
        <position position="287"/>
    </location>
</feature>
<feature type="sequence conflict" description="In Ref. 3; BAC97989." evidence="9" ref="3">
    <original>T</original>
    <variation>I</variation>
    <location>
        <position position="299"/>
    </location>
</feature>
<evidence type="ECO:0000250" key="1"/>
<evidence type="ECO:0000250" key="2">
    <source>
        <dbReference type="UniProtKB" id="Q924N5"/>
    </source>
</evidence>
<evidence type="ECO:0000250" key="3">
    <source>
        <dbReference type="UniProtKB" id="Q96GR2"/>
    </source>
</evidence>
<evidence type="ECO:0000256" key="4">
    <source>
        <dbReference type="SAM" id="MobiDB-lite"/>
    </source>
</evidence>
<evidence type="ECO:0000269" key="5">
    <source>
    </source>
</evidence>
<evidence type="ECO:0000269" key="6">
    <source>
    </source>
</evidence>
<evidence type="ECO:0000269" key="7">
    <source>
    </source>
</evidence>
<evidence type="ECO:0000269" key="8">
    <source>
    </source>
</evidence>
<evidence type="ECO:0000305" key="9"/>
<evidence type="ECO:0000312" key="10">
    <source>
        <dbReference type="MGI" id="MGI:2385656"/>
    </source>
</evidence>
<evidence type="ECO:0007744" key="11">
    <source>
    </source>
</evidence>
<evidence type="ECO:0007744" key="12">
    <source>
    </source>
</evidence>
<keyword id="KW-0067">ATP-binding</keyword>
<keyword id="KW-1003">Cell membrane</keyword>
<keyword id="KW-0963">Cytoplasm</keyword>
<keyword id="KW-0968">Cytoplasmic vesicle</keyword>
<keyword id="KW-0256">Endoplasmic reticulum</keyword>
<keyword id="KW-0276">Fatty acid metabolism</keyword>
<keyword id="KW-0436">Ligase</keyword>
<keyword id="KW-0443">Lipid metabolism</keyword>
<keyword id="KW-0472">Membrane</keyword>
<keyword id="KW-0492">Microsome</keyword>
<keyword id="KW-0547">Nucleotide-binding</keyword>
<keyword id="KW-0597">Phosphoprotein</keyword>
<keyword id="KW-1185">Reference proteome</keyword>
<proteinExistence type="evidence at protein level"/>
<comment type="function">
    <text evidence="3 5 6 7">Catalyzes the conversion of fatty acids such as long-chain and very long-chain fatty acids to their active form acyl-CoAs for both synthesis of cellular lipids, and degradation via beta-oxidation (By similarity) (PubMed:11112418, PubMed:12975357, PubMed:14516277). Can activate diverse saturated, monosaturated and polyunsaturated fatty acids (PubMed:11112418, PubMed:14516277).</text>
</comment>
<comment type="catalytic activity">
    <reaction evidence="5 7">
        <text>a long-chain fatty acid + ATP + CoA = a long-chain fatty acyl-CoA + AMP + diphosphate</text>
        <dbReference type="Rhea" id="RHEA:15421"/>
        <dbReference type="ChEBI" id="CHEBI:30616"/>
        <dbReference type="ChEBI" id="CHEBI:33019"/>
        <dbReference type="ChEBI" id="CHEBI:57287"/>
        <dbReference type="ChEBI" id="CHEBI:57560"/>
        <dbReference type="ChEBI" id="CHEBI:83139"/>
        <dbReference type="ChEBI" id="CHEBI:456215"/>
        <dbReference type="EC" id="6.2.1.3"/>
    </reaction>
</comment>
<comment type="catalytic activity">
    <reaction evidence="3">
        <text>(E)-hexadec-2-enoate + ATP + CoA = (2E)-hexadecenoyl-CoA + AMP + diphosphate</text>
        <dbReference type="Rhea" id="RHEA:36139"/>
        <dbReference type="ChEBI" id="CHEBI:30616"/>
        <dbReference type="ChEBI" id="CHEBI:33019"/>
        <dbReference type="ChEBI" id="CHEBI:57287"/>
        <dbReference type="ChEBI" id="CHEBI:61526"/>
        <dbReference type="ChEBI" id="CHEBI:72745"/>
        <dbReference type="ChEBI" id="CHEBI:456215"/>
    </reaction>
</comment>
<comment type="catalytic activity">
    <reaction evidence="3">
        <text>hexadecanoate + ATP + CoA = hexadecanoyl-CoA + AMP + diphosphate</text>
        <dbReference type="Rhea" id="RHEA:30751"/>
        <dbReference type="ChEBI" id="CHEBI:7896"/>
        <dbReference type="ChEBI" id="CHEBI:30616"/>
        <dbReference type="ChEBI" id="CHEBI:33019"/>
        <dbReference type="ChEBI" id="CHEBI:57287"/>
        <dbReference type="ChEBI" id="CHEBI:57379"/>
        <dbReference type="ChEBI" id="CHEBI:456215"/>
    </reaction>
</comment>
<comment type="subcellular location">
    <subcellularLocation>
        <location evidence="3">Cytoplasm</location>
    </subcellularLocation>
    <subcellularLocation>
        <location>Cytoplasmic vesicle</location>
    </subcellularLocation>
    <subcellularLocation>
        <location>Microsome</location>
    </subcellularLocation>
    <subcellularLocation>
        <location evidence="3">Endoplasmic reticulum</location>
    </subcellularLocation>
    <subcellularLocation>
        <location evidence="3">Cell membrane</location>
    </subcellularLocation>
</comment>
<comment type="tissue specificity">
    <text evidence="5 6 7 8">Mainly expressed in brain. Also expressed in adrenal gland and testis. In brain, it is present in cerebral cortical and cerebellar neurons and in steroidogenic cells of the adrenal gland, testis and ovary (at protein level).</text>
</comment>
<comment type="developmental stage">
    <text evidence="7">First detected on embryonic day 18 and increases steadily towards adulthood.</text>
</comment>
<comment type="similarity">
    <text evidence="9">Belongs to the ATP-dependent AMP-binding enzyme family. Bubblegum subfamily.</text>
</comment>
<comment type="sequence caution" evidence="9">
    <conflict type="erroneous initiation">
        <sequence resource="EMBL-CDS" id="BAC97989"/>
    </conflict>
    <text>Extended N-terminus.</text>
</comment>
<protein>
    <recommendedName>
        <fullName evidence="9">Long-chain-fatty-acid--CoA ligase ACSBG1</fullName>
        <ecNumber evidence="5 7">6.2.1.3</ecNumber>
    </recommendedName>
    <alternativeName>
        <fullName>Acyl-CoA synthetase bubblegum family member 1</fullName>
        <shortName>mBG1</shortName>
    </alternativeName>
    <alternativeName>
        <fullName>Gonadotropin-regulated long chain acyl CoA synthetase</fullName>
        <shortName>GR-LACS</shortName>
    </alternativeName>
    <alternativeName>
        <fullName>Lipidosin</fullName>
    </alternativeName>
</protein>
<organism>
    <name type="scientific">Mus musculus</name>
    <name type="common">Mouse</name>
    <dbReference type="NCBI Taxonomy" id="10090"/>
    <lineage>
        <taxon>Eukaryota</taxon>
        <taxon>Metazoa</taxon>
        <taxon>Chordata</taxon>
        <taxon>Craniata</taxon>
        <taxon>Vertebrata</taxon>
        <taxon>Euteleostomi</taxon>
        <taxon>Mammalia</taxon>
        <taxon>Eutheria</taxon>
        <taxon>Euarchontoglires</taxon>
        <taxon>Glires</taxon>
        <taxon>Rodentia</taxon>
        <taxon>Myomorpha</taxon>
        <taxon>Muroidea</taxon>
        <taxon>Muridae</taxon>
        <taxon>Murinae</taxon>
        <taxon>Mus</taxon>
        <taxon>Mus</taxon>
    </lineage>
</organism>
<sequence>MPRGSEAGYCCLSRDSNMPDSRDDQQQGASLGTSQDNSQTSSLIDGQTLSKESPSHGLELSAPEKARAASLDGAEEALWTTRADGRVRLRLEPFCTQRPYTVHQMFYEALDKYGNLSALGFKRKDKWERISYYQYYLIARKVAKGFLKLGLERAHSVAILGFNSPEWFFSAVGTVFAGGIVTGIYTTSSPEACQYISHDCRANVIVVDTQKQLEKILKIWKDLPHLKAVVIYQEPPPKKMANVYTMEELIELGQEVPEEALDAIIDTQQPNQCCVLVYTSGTTGNPKGVMLSQDNITWTARYGSQAGDIQPAEVQQEVVVSYLPLSHIAAQIYDLWTGIQWGAQVCFADPDALKGTLVNTLREVEPTSHMGVPRVWEKIMERIQEVAAQSGFIRRKMLLWAMSVTLEQNLTCPSNDLKPFTSRLADYLVLARVRQALGFAKCQKNFYGAAPMTAETQRFFLGLNIRLYAGYGLSESTGPHFMSSPYNYRLYSSGRVVPGCRVKLVNQDADGIGEICLWGRTIFMGYLNMEDKTCEAIDSEGWLHTGDMGRLDADGFLYITGRLKELIITAGGENVPPVPIEEAVKMELPIISSAMLIGDQRKFLSMLLTLKCTLDPETSEPTDSLTEQAVEFCQRVGSKASTVSEIVGQRDEAVYQAIHEGIQRVNANAAARPYHIQKWAILQRDFSISGGELGPTMKLKRLTVLEKYKDIIDSFYQEQKQ</sequence>
<gene>
    <name evidence="10" type="primary">Acsbg1</name>
    <name type="synonym">Kiaa0631</name>
    <name type="synonym">Lpd</name>
</gene>
<accession>Q99PU5</accession>
<accession>Q6ZQ79</accession>
<dbReference type="EC" id="6.2.1.3" evidence="5 7"/>
<dbReference type="EMBL" id="AB050554">
    <property type="protein sequence ID" value="BAB32783.1"/>
    <property type="molecule type" value="mRNA"/>
</dbReference>
<dbReference type="EMBL" id="DQ009026">
    <property type="protein sequence ID" value="AAY58226.1"/>
    <property type="molecule type" value="Genomic_DNA"/>
</dbReference>
<dbReference type="EMBL" id="DQ009013">
    <property type="protein sequence ID" value="AAY58226.1"/>
    <property type="status" value="JOINED"/>
    <property type="molecule type" value="Genomic_DNA"/>
</dbReference>
<dbReference type="EMBL" id="DQ009014">
    <property type="protein sequence ID" value="AAY58226.1"/>
    <property type="status" value="JOINED"/>
    <property type="molecule type" value="Genomic_DNA"/>
</dbReference>
<dbReference type="EMBL" id="DQ009015">
    <property type="protein sequence ID" value="AAY58226.1"/>
    <property type="status" value="JOINED"/>
    <property type="molecule type" value="Genomic_DNA"/>
</dbReference>
<dbReference type="EMBL" id="DQ009016">
    <property type="protein sequence ID" value="AAY58226.1"/>
    <property type="status" value="JOINED"/>
    <property type="molecule type" value="Genomic_DNA"/>
</dbReference>
<dbReference type="EMBL" id="DQ009017">
    <property type="protein sequence ID" value="AAY58226.1"/>
    <property type="status" value="JOINED"/>
    <property type="molecule type" value="Genomic_DNA"/>
</dbReference>
<dbReference type="EMBL" id="DQ009018">
    <property type="protein sequence ID" value="AAY58226.1"/>
    <property type="status" value="JOINED"/>
    <property type="molecule type" value="Genomic_DNA"/>
</dbReference>
<dbReference type="EMBL" id="DQ009019">
    <property type="protein sequence ID" value="AAY58226.1"/>
    <property type="status" value="JOINED"/>
    <property type="molecule type" value="Genomic_DNA"/>
</dbReference>
<dbReference type="EMBL" id="DQ009020">
    <property type="protein sequence ID" value="AAY58226.1"/>
    <property type="status" value="JOINED"/>
    <property type="molecule type" value="Genomic_DNA"/>
</dbReference>
<dbReference type="EMBL" id="DQ009021">
    <property type="protein sequence ID" value="AAY58226.1"/>
    <property type="status" value="JOINED"/>
    <property type="molecule type" value="Genomic_DNA"/>
</dbReference>
<dbReference type="EMBL" id="DQ009022">
    <property type="protein sequence ID" value="AAY58226.1"/>
    <property type="status" value="JOINED"/>
    <property type="molecule type" value="Genomic_DNA"/>
</dbReference>
<dbReference type="EMBL" id="DQ009023">
    <property type="protein sequence ID" value="AAY58226.1"/>
    <property type="status" value="JOINED"/>
    <property type="molecule type" value="Genomic_DNA"/>
</dbReference>
<dbReference type="EMBL" id="DQ009024">
    <property type="protein sequence ID" value="AAY58226.1"/>
    <property type="status" value="JOINED"/>
    <property type="molecule type" value="Genomic_DNA"/>
</dbReference>
<dbReference type="EMBL" id="DQ009025">
    <property type="protein sequence ID" value="AAY58226.1"/>
    <property type="status" value="JOINED"/>
    <property type="molecule type" value="Genomic_DNA"/>
</dbReference>
<dbReference type="EMBL" id="AK129179">
    <property type="protein sequence ID" value="BAC97989.1"/>
    <property type="status" value="ALT_INIT"/>
    <property type="molecule type" value="mRNA"/>
</dbReference>
<dbReference type="EMBL" id="AK054103">
    <property type="protein sequence ID" value="BAC35657.1"/>
    <property type="molecule type" value="mRNA"/>
</dbReference>
<dbReference type="EMBL" id="BC057322">
    <property type="protein sequence ID" value="AAH57322.1"/>
    <property type="molecule type" value="mRNA"/>
</dbReference>
<dbReference type="CCDS" id="CCDS23192.1"/>
<dbReference type="PIR" id="JC7557">
    <property type="entry name" value="JC7557"/>
</dbReference>
<dbReference type="RefSeq" id="NP_444408.1">
    <property type="nucleotide sequence ID" value="NM_053178.2"/>
</dbReference>
<dbReference type="SMR" id="Q99PU5"/>
<dbReference type="BioGRID" id="220460">
    <property type="interactions" value="9"/>
</dbReference>
<dbReference type="FunCoup" id="Q99PU5">
    <property type="interactions" value="211"/>
</dbReference>
<dbReference type="IntAct" id="Q99PU5">
    <property type="interactions" value="1"/>
</dbReference>
<dbReference type="STRING" id="10090.ENSMUSP00000034822"/>
<dbReference type="iPTMnet" id="Q99PU5"/>
<dbReference type="PhosphoSitePlus" id="Q99PU5"/>
<dbReference type="SwissPalm" id="Q99PU5"/>
<dbReference type="PaxDb" id="10090-ENSMUSP00000034822"/>
<dbReference type="PeptideAtlas" id="Q99PU5"/>
<dbReference type="ProteomicsDB" id="285638"/>
<dbReference type="Antibodypedia" id="27568">
    <property type="antibodies" value="170 antibodies from 23 providers"/>
</dbReference>
<dbReference type="DNASU" id="94180"/>
<dbReference type="Ensembl" id="ENSMUST00000034822.12">
    <property type="protein sequence ID" value="ENSMUSP00000034822.6"/>
    <property type="gene ID" value="ENSMUSG00000032281.12"/>
</dbReference>
<dbReference type="GeneID" id="94180"/>
<dbReference type="KEGG" id="mmu:94180"/>
<dbReference type="UCSC" id="uc009prj.1">
    <property type="organism name" value="mouse"/>
</dbReference>
<dbReference type="AGR" id="MGI:2385656"/>
<dbReference type="CTD" id="23205"/>
<dbReference type="MGI" id="MGI:2385656">
    <property type="gene designation" value="Acsbg1"/>
</dbReference>
<dbReference type="VEuPathDB" id="HostDB:ENSMUSG00000032281"/>
<dbReference type="eggNOG" id="KOG1256">
    <property type="taxonomic scope" value="Eukaryota"/>
</dbReference>
<dbReference type="GeneTree" id="ENSGT00940000160380"/>
<dbReference type="HOGENOM" id="CLU_000022_45_5_1"/>
<dbReference type="InParanoid" id="Q99PU5"/>
<dbReference type="OMA" id="IGDHRKY"/>
<dbReference type="OrthoDB" id="3633556at2759"/>
<dbReference type="PhylomeDB" id="Q99PU5"/>
<dbReference type="TreeFam" id="TF354286"/>
<dbReference type="BRENDA" id="6.2.1.3">
    <property type="organism ID" value="3474"/>
</dbReference>
<dbReference type="Reactome" id="R-MMU-75876">
    <property type="pathway name" value="Synthesis of very long-chain fatty acyl-CoAs"/>
</dbReference>
<dbReference type="BioGRID-ORCS" id="94180">
    <property type="hits" value="1 hit in 78 CRISPR screens"/>
</dbReference>
<dbReference type="ChiTaRS" id="Acsbg1">
    <property type="organism name" value="mouse"/>
</dbReference>
<dbReference type="PRO" id="PR:Q99PU5"/>
<dbReference type="Proteomes" id="UP000000589">
    <property type="component" value="Chromosome 9"/>
</dbReference>
<dbReference type="RNAct" id="Q99PU5">
    <property type="molecule type" value="protein"/>
</dbReference>
<dbReference type="Bgee" id="ENSMUSG00000032281">
    <property type="expression patterns" value="Expressed in lip and 142 other cell types or tissues"/>
</dbReference>
<dbReference type="ExpressionAtlas" id="Q99PU5">
    <property type="expression patterns" value="baseline and differential"/>
</dbReference>
<dbReference type="GO" id="GO:0031410">
    <property type="term" value="C:cytoplasmic vesicle"/>
    <property type="evidence" value="ECO:0007669"/>
    <property type="project" value="UniProtKB-KW"/>
</dbReference>
<dbReference type="GO" id="GO:0005783">
    <property type="term" value="C:endoplasmic reticulum"/>
    <property type="evidence" value="ECO:0000250"/>
    <property type="project" value="UniProtKB"/>
</dbReference>
<dbReference type="GO" id="GO:0005886">
    <property type="term" value="C:plasma membrane"/>
    <property type="evidence" value="ECO:0000250"/>
    <property type="project" value="UniProtKB"/>
</dbReference>
<dbReference type="GO" id="GO:0005524">
    <property type="term" value="F:ATP binding"/>
    <property type="evidence" value="ECO:0007669"/>
    <property type="project" value="UniProtKB-KW"/>
</dbReference>
<dbReference type="GO" id="GO:0004467">
    <property type="term" value="F:long-chain fatty acid-CoA ligase activity"/>
    <property type="evidence" value="ECO:0000250"/>
    <property type="project" value="UniProtKB"/>
</dbReference>
<dbReference type="GO" id="GO:0031957">
    <property type="term" value="F:very long-chain fatty acid-CoA ligase activity"/>
    <property type="evidence" value="ECO:0000250"/>
    <property type="project" value="HGNC-UCL"/>
</dbReference>
<dbReference type="GO" id="GO:0001676">
    <property type="term" value="P:long-chain fatty acid metabolic process"/>
    <property type="evidence" value="ECO:0000250"/>
    <property type="project" value="HGNC-UCL"/>
</dbReference>
<dbReference type="GO" id="GO:0051384">
    <property type="term" value="P:response to glucocorticoid"/>
    <property type="evidence" value="ECO:0000315"/>
    <property type="project" value="MGI"/>
</dbReference>
<dbReference type="GO" id="GO:0000038">
    <property type="term" value="P:very long-chain fatty acid metabolic process"/>
    <property type="evidence" value="ECO:0000250"/>
    <property type="project" value="HGNC-UCL"/>
</dbReference>
<dbReference type="CDD" id="cd05933">
    <property type="entry name" value="ACSBG_like"/>
    <property type="match status" value="1"/>
</dbReference>
<dbReference type="FunFam" id="3.40.50.12780:FF:000021">
    <property type="entry name" value="Long-chain-fatty-acid--CoA ligase ACSBG1 isoform 1"/>
    <property type="match status" value="1"/>
</dbReference>
<dbReference type="FunFam" id="3.40.50.12780:FF:000023">
    <property type="entry name" value="Long-chain-fatty-acid--CoA ligase ACSBG1 isoform 1"/>
    <property type="match status" value="1"/>
</dbReference>
<dbReference type="Gene3D" id="3.40.50.12780">
    <property type="entry name" value="N-terminal domain of ligase-like"/>
    <property type="match status" value="2"/>
</dbReference>
<dbReference type="InterPro" id="IPR020845">
    <property type="entry name" value="AMP-binding_CS"/>
</dbReference>
<dbReference type="InterPro" id="IPR000873">
    <property type="entry name" value="AMP-dep_synth/lig_dom"/>
</dbReference>
<dbReference type="InterPro" id="IPR042099">
    <property type="entry name" value="ANL_N_sf"/>
</dbReference>
<dbReference type="PANTHER" id="PTHR43272:SF93">
    <property type="entry name" value="ACYL-COA SYNTHETASE BUBBLEGUM FAMILY MEMBER 1"/>
    <property type="match status" value="1"/>
</dbReference>
<dbReference type="PANTHER" id="PTHR43272">
    <property type="entry name" value="LONG-CHAIN-FATTY-ACID--COA LIGASE"/>
    <property type="match status" value="1"/>
</dbReference>
<dbReference type="Pfam" id="PF00501">
    <property type="entry name" value="AMP-binding"/>
    <property type="match status" value="1"/>
</dbReference>
<dbReference type="Pfam" id="PF23562">
    <property type="entry name" value="AMP-binding_C_3"/>
    <property type="match status" value="1"/>
</dbReference>
<dbReference type="SUPFAM" id="SSF56801">
    <property type="entry name" value="Acetyl-CoA synthetase-like"/>
    <property type="match status" value="1"/>
</dbReference>
<dbReference type="PROSITE" id="PS00455">
    <property type="entry name" value="AMP_BINDING"/>
    <property type="match status" value="1"/>
</dbReference>
<reference key="1">
    <citation type="journal article" date="2000" name="Biochem. Biophys. Res. Commun.">
        <title>Novel acyl-CoA synthetase in adrenoleukodystrophy target tissues.</title>
        <authorList>
            <person name="Moriya-Sato A."/>
            <person name="Hida A."/>
            <person name="Inagawa-Ogashiwa M."/>
            <person name="Wada M.R."/>
            <person name="Sugiyama K."/>
            <person name="Shimizu J."/>
            <person name="Yabuki T."/>
            <person name="Seyama Y."/>
            <person name="Hashimoto N."/>
        </authorList>
    </citation>
    <scope>NUCLEOTIDE SEQUENCE [MRNA]</scope>
    <scope>FUNCTION</scope>
    <scope>ENZYME ACTIVITY</scope>
    <scope>TISSUE SPECIFICITY</scope>
    <scope>MUTAGENESIS OF GLY-281 AND LYS-287</scope>
    <source>
        <tissue>Brain</tissue>
    </source>
</reference>
<reference key="2">
    <citation type="journal article" date="2005" name="Gene">
        <title>The gonadotropin-regulated long-chain acyl CoA synthetase gene: a novel downstream Sp1/Sp3 binding element critical for transcriptional promoter activity.</title>
        <authorList>
            <person name="Sheng Y."/>
            <person name="Li J."/>
            <person name="Dufau M.L."/>
            <person name="Tsai-Morris C.-H."/>
        </authorList>
    </citation>
    <scope>NUCLEOTIDE SEQUENCE [GENOMIC DNA]</scope>
    <source>
        <strain>129/SvJ</strain>
    </source>
</reference>
<reference key="3">
    <citation type="journal article" date="2003" name="DNA Res.">
        <title>Prediction of the coding sequences of mouse homologues of KIAA gene: III. The complete nucleotide sequences of 500 mouse KIAA-homologous cDNAs identified by screening of terminal sequences of cDNA clones randomly sampled from size-fractionated libraries.</title>
        <authorList>
            <person name="Okazaki N."/>
            <person name="Kikuno R."/>
            <person name="Ohara R."/>
            <person name="Inamoto S."/>
            <person name="Koseki H."/>
            <person name="Hiraoka S."/>
            <person name="Saga Y."/>
            <person name="Nagase T."/>
            <person name="Ohara O."/>
            <person name="Koga H."/>
        </authorList>
    </citation>
    <scope>NUCLEOTIDE SEQUENCE [LARGE SCALE MRNA]</scope>
</reference>
<reference key="4">
    <citation type="journal article" date="2005" name="Science">
        <title>The transcriptional landscape of the mammalian genome.</title>
        <authorList>
            <person name="Carninci P."/>
            <person name="Kasukawa T."/>
            <person name="Katayama S."/>
            <person name="Gough J."/>
            <person name="Frith M.C."/>
            <person name="Maeda N."/>
            <person name="Oyama R."/>
            <person name="Ravasi T."/>
            <person name="Lenhard B."/>
            <person name="Wells C."/>
            <person name="Kodzius R."/>
            <person name="Shimokawa K."/>
            <person name="Bajic V.B."/>
            <person name="Brenner S.E."/>
            <person name="Batalov S."/>
            <person name="Forrest A.R."/>
            <person name="Zavolan M."/>
            <person name="Davis M.J."/>
            <person name="Wilming L.G."/>
            <person name="Aidinis V."/>
            <person name="Allen J.E."/>
            <person name="Ambesi-Impiombato A."/>
            <person name="Apweiler R."/>
            <person name="Aturaliya R.N."/>
            <person name="Bailey T.L."/>
            <person name="Bansal M."/>
            <person name="Baxter L."/>
            <person name="Beisel K.W."/>
            <person name="Bersano T."/>
            <person name="Bono H."/>
            <person name="Chalk A.M."/>
            <person name="Chiu K.P."/>
            <person name="Choudhary V."/>
            <person name="Christoffels A."/>
            <person name="Clutterbuck D.R."/>
            <person name="Crowe M.L."/>
            <person name="Dalla E."/>
            <person name="Dalrymple B.P."/>
            <person name="de Bono B."/>
            <person name="Della Gatta G."/>
            <person name="di Bernardo D."/>
            <person name="Down T."/>
            <person name="Engstrom P."/>
            <person name="Fagiolini M."/>
            <person name="Faulkner G."/>
            <person name="Fletcher C.F."/>
            <person name="Fukushima T."/>
            <person name="Furuno M."/>
            <person name="Futaki S."/>
            <person name="Gariboldi M."/>
            <person name="Georgii-Hemming P."/>
            <person name="Gingeras T.R."/>
            <person name="Gojobori T."/>
            <person name="Green R.E."/>
            <person name="Gustincich S."/>
            <person name="Harbers M."/>
            <person name="Hayashi Y."/>
            <person name="Hensch T.K."/>
            <person name="Hirokawa N."/>
            <person name="Hill D."/>
            <person name="Huminiecki L."/>
            <person name="Iacono M."/>
            <person name="Ikeo K."/>
            <person name="Iwama A."/>
            <person name="Ishikawa T."/>
            <person name="Jakt M."/>
            <person name="Kanapin A."/>
            <person name="Katoh M."/>
            <person name="Kawasawa Y."/>
            <person name="Kelso J."/>
            <person name="Kitamura H."/>
            <person name="Kitano H."/>
            <person name="Kollias G."/>
            <person name="Krishnan S.P."/>
            <person name="Kruger A."/>
            <person name="Kummerfeld S.K."/>
            <person name="Kurochkin I.V."/>
            <person name="Lareau L.F."/>
            <person name="Lazarevic D."/>
            <person name="Lipovich L."/>
            <person name="Liu J."/>
            <person name="Liuni S."/>
            <person name="McWilliam S."/>
            <person name="Madan Babu M."/>
            <person name="Madera M."/>
            <person name="Marchionni L."/>
            <person name="Matsuda H."/>
            <person name="Matsuzawa S."/>
            <person name="Miki H."/>
            <person name="Mignone F."/>
            <person name="Miyake S."/>
            <person name="Morris K."/>
            <person name="Mottagui-Tabar S."/>
            <person name="Mulder N."/>
            <person name="Nakano N."/>
            <person name="Nakauchi H."/>
            <person name="Ng P."/>
            <person name="Nilsson R."/>
            <person name="Nishiguchi S."/>
            <person name="Nishikawa S."/>
            <person name="Nori F."/>
            <person name="Ohara O."/>
            <person name="Okazaki Y."/>
            <person name="Orlando V."/>
            <person name="Pang K.C."/>
            <person name="Pavan W.J."/>
            <person name="Pavesi G."/>
            <person name="Pesole G."/>
            <person name="Petrovsky N."/>
            <person name="Piazza S."/>
            <person name="Reed J."/>
            <person name="Reid J.F."/>
            <person name="Ring B.Z."/>
            <person name="Ringwald M."/>
            <person name="Rost B."/>
            <person name="Ruan Y."/>
            <person name="Salzberg S.L."/>
            <person name="Sandelin A."/>
            <person name="Schneider C."/>
            <person name="Schoenbach C."/>
            <person name="Sekiguchi K."/>
            <person name="Semple C.A."/>
            <person name="Seno S."/>
            <person name="Sessa L."/>
            <person name="Sheng Y."/>
            <person name="Shibata Y."/>
            <person name="Shimada H."/>
            <person name="Shimada K."/>
            <person name="Silva D."/>
            <person name="Sinclair B."/>
            <person name="Sperling S."/>
            <person name="Stupka E."/>
            <person name="Sugiura K."/>
            <person name="Sultana R."/>
            <person name="Takenaka Y."/>
            <person name="Taki K."/>
            <person name="Tammoja K."/>
            <person name="Tan S.L."/>
            <person name="Tang S."/>
            <person name="Taylor M.S."/>
            <person name="Tegner J."/>
            <person name="Teichmann S.A."/>
            <person name="Ueda H.R."/>
            <person name="van Nimwegen E."/>
            <person name="Verardo R."/>
            <person name="Wei C.L."/>
            <person name="Yagi K."/>
            <person name="Yamanishi H."/>
            <person name="Zabarovsky E."/>
            <person name="Zhu S."/>
            <person name="Zimmer A."/>
            <person name="Hide W."/>
            <person name="Bult C."/>
            <person name="Grimmond S.M."/>
            <person name="Teasdale R.D."/>
            <person name="Liu E.T."/>
            <person name="Brusic V."/>
            <person name="Quackenbush J."/>
            <person name="Wahlestedt C."/>
            <person name="Mattick J.S."/>
            <person name="Hume D.A."/>
            <person name="Kai C."/>
            <person name="Sasaki D."/>
            <person name="Tomaru Y."/>
            <person name="Fukuda S."/>
            <person name="Kanamori-Katayama M."/>
            <person name="Suzuki M."/>
            <person name="Aoki J."/>
            <person name="Arakawa T."/>
            <person name="Iida J."/>
            <person name="Imamura K."/>
            <person name="Itoh M."/>
            <person name="Kato T."/>
            <person name="Kawaji H."/>
            <person name="Kawagashira N."/>
            <person name="Kawashima T."/>
            <person name="Kojima M."/>
            <person name="Kondo S."/>
            <person name="Konno H."/>
            <person name="Nakano K."/>
            <person name="Ninomiya N."/>
            <person name="Nishio T."/>
            <person name="Okada M."/>
            <person name="Plessy C."/>
            <person name="Shibata K."/>
            <person name="Shiraki T."/>
            <person name="Suzuki S."/>
            <person name="Tagami M."/>
            <person name="Waki K."/>
            <person name="Watahiki A."/>
            <person name="Okamura-Oho Y."/>
            <person name="Suzuki H."/>
            <person name="Kawai J."/>
            <person name="Hayashizaki Y."/>
        </authorList>
    </citation>
    <scope>NUCLEOTIDE SEQUENCE [LARGE SCALE MRNA]</scope>
    <source>
        <strain>C57BL/6J</strain>
        <tissue>Oviduct</tissue>
    </source>
</reference>
<reference key="5">
    <citation type="journal article" date="2004" name="Genome Res.">
        <title>The status, quality, and expansion of the NIH full-length cDNA project: the Mammalian Gene Collection (MGC).</title>
        <authorList>
            <consortium name="The MGC Project Team"/>
        </authorList>
    </citation>
    <scope>NUCLEOTIDE SEQUENCE [LARGE SCALE MRNA]</scope>
    <source>
        <strain>C57BL/6J</strain>
        <tissue>Brain</tissue>
    </source>
</reference>
<reference key="6">
    <citation type="journal article" date="2003" name="J. Biol. Chem.">
        <title>The acyl-CoA synthetase 'bubblegum' (lipidosin): further characterization and role in neuronal fatty acid beta-oxidation.</title>
        <authorList>
            <person name="Pei Z."/>
            <person name="Oey N.A."/>
            <person name="Zuidervaart M.M."/>
            <person name="Jia Z."/>
            <person name="Li Y."/>
            <person name="Steinberg S.J."/>
            <person name="Smith K.D."/>
            <person name="Watkins P.A."/>
        </authorList>
    </citation>
    <scope>FUNCTION</scope>
    <scope>SUBCELLULAR LOCATION</scope>
    <scope>TISSUE SPECIFICITY</scope>
</reference>
<reference key="7">
    <citation type="journal article" date="2004" name="Biochem. J.">
        <title>Murine bubblegum orthologue is a microsomal very long-chain acyl-CoA synthetase.</title>
        <authorList>
            <person name="Fraisl P."/>
            <person name="Forss-Petter S."/>
            <person name="Zigman M."/>
            <person name="Berger J."/>
        </authorList>
    </citation>
    <scope>ENZYME ACTIVITY</scope>
    <scope>FUNCTION</scope>
    <scope>SUBCELLULAR LOCATION</scope>
    <scope>TISSUE SPECIFICITY</scope>
    <scope>DEVELOPMENTAL STAGE</scope>
</reference>
<reference key="8">
    <citation type="journal article" date="2006" name="J. Steroid Biochem. Mol. Biol.">
        <title>Tissue-cell- and species-specific expression of gonadotropin-regulated long chain acyl-CoA synthetase (GR-LACS) in gonads, adrenal and brain. Identification of novel forms in the brain.</title>
        <authorList>
            <person name="Li J."/>
            <person name="Sheng Y."/>
            <person name="Tang P.-Z."/>
            <person name="Tsai-Morris C.-H."/>
            <person name="Dufau M.L."/>
        </authorList>
    </citation>
    <scope>TISSUE SPECIFICITY</scope>
</reference>
<reference key="9">
    <citation type="journal article" date="2006" name="Mol. Cell. Proteomics">
        <title>Comprehensive identification of phosphorylation sites in postsynaptic density preparations.</title>
        <authorList>
            <person name="Trinidad J.C."/>
            <person name="Specht C.G."/>
            <person name="Thalhammer A."/>
            <person name="Schoepfer R."/>
            <person name="Burlingame A.L."/>
        </authorList>
    </citation>
    <scope>IDENTIFICATION BY MASS SPECTROMETRY [LARGE SCALE ANALYSIS]</scope>
    <source>
        <tissue>Brain</tissue>
    </source>
</reference>
<reference key="10">
    <citation type="journal article" date="2008" name="J. Proteome Res.">
        <title>Large-scale identification and evolution indexing of tyrosine phosphorylation sites from murine brain.</title>
        <authorList>
            <person name="Ballif B.A."/>
            <person name="Carey G.R."/>
            <person name="Sunyaev S.R."/>
            <person name="Gygi S.P."/>
        </authorList>
    </citation>
    <scope>PHOSPHORYLATION [LARGE SCALE ANALYSIS] AT TYR-655</scope>
    <scope>IDENTIFICATION BY MASS SPECTROMETRY [LARGE SCALE ANALYSIS]</scope>
    <source>
        <tissue>Brain</tissue>
    </source>
</reference>
<reference key="11">
    <citation type="journal article" date="2010" name="Cell">
        <title>A tissue-specific atlas of mouse protein phosphorylation and expression.</title>
        <authorList>
            <person name="Huttlin E.L."/>
            <person name="Jedrychowski M.P."/>
            <person name="Elias J.E."/>
            <person name="Goswami T."/>
            <person name="Rad R."/>
            <person name="Beausoleil S.A."/>
            <person name="Villen J."/>
            <person name="Haas W."/>
            <person name="Sowa M.E."/>
            <person name="Gygi S.P."/>
        </authorList>
    </citation>
    <scope>PHOSPHORYLATION [LARGE SCALE ANALYSIS] AT SER-53 AND SER-70</scope>
    <scope>IDENTIFICATION BY MASS SPECTROMETRY [LARGE SCALE ANALYSIS]</scope>
    <source>
        <tissue>Brain</tissue>
        <tissue>Testis</tissue>
    </source>
</reference>
<name>ACBG1_MOUSE</name>